<name>BIOF_SALDC</name>
<accession>B5FP62</accession>
<proteinExistence type="inferred from homology"/>
<gene>
    <name evidence="1" type="primary">bioF</name>
    <name type="ordered locus">SeD_A0890</name>
</gene>
<organism>
    <name type="scientific">Salmonella dublin (strain CT_02021853)</name>
    <dbReference type="NCBI Taxonomy" id="439851"/>
    <lineage>
        <taxon>Bacteria</taxon>
        <taxon>Pseudomonadati</taxon>
        <taxon>Pseudomonadota</taxon>
        <taxon>Gammaproteobacteria</taxon>
        <taxon>Enterobacterales</taxon>
        <taxon>Enterobacteriaceae</taxon>
        <taxon>Salmonella</taxon>
    </lineage>
</organism>
<feature type="chain" id="PRO_0000381095" description="8-amino-7-oxononanoate synthase">
    <location>
        <begin position="1"/>
        <end position="385"/>
    </location>
</feature>
<feature type="binding site" evidence="1">
    <location>
        <position position="21"/>
    </location>
    <ligand>
        <name>substrate</name>
    </ligand>
</feature>
<feature type="binding site" evidence="1">
    <location>
        <begin position="108"/>
        <end position="109"/>
    </location>
    <ligand>
        <name>pyridoxal 5'-phosphate</name>
        <dbReference type="ChEBI" id="CHEBI:597326"/>
    </ligand>
</feature>
<feature type="binding site" evidence="1">
    <location>
        <position position="133"/>
    </location>
    <ligand>
        <name>substrate</name>
    </ligand>
</feature>
<feature type="binding site" evidence="1">
    <location>
        <position position="179"/>
    </location>
    <ligand>
        <name>pyridoxal 5'-phosphate</name>
        <dbReference type="ChEBI" id="CHEBI:597326"/>
    </ligand>
</feature>
<feature type="binding site" evidence="1">
    <location>
        <position position="207"/>
    </location>
    <ligand>
        <name>pyridoxal 5'-phosphate</name>
        <dbReference type="ChEBI" id="CHEBI:597326"/>
    </ligand>
</feature>
<feature type="binding site" evidence="1">
    <location>
        <position position="233"/>
    </location>
    <ligand>
        <name>pyridoxal 5'-phosphate</name>
        <dbReference type="ChEBI" id="CHEBI:597326"/>
    </ligand>
</feature>
<feature type="binding site" evidence="1">
    <location>
        <position position="352"/>
    </location>
    <ligand>
        <name>substrate</name>
    </ligand>
</feature>
<feature type="modified residue" description="N6-(pyridoxal phosphate)lysine" evidence="1">
    <location>
        <position position="236"/>
    </location>
</feature>
<comment type="function">
    <text evidence="1">Catalyzes the decarboxylative condensation of pimeloyl-[acyl-carrier protein] and L-alanine to produce 8-amino-7-oxononanoate (AON), [acyl-carrier protein], and carbon dioxide.</text>
</comment>
<comment type="catalytic activity">
    <reaction evidence="1">
        <text>6-carboxyhexanoyl-[ACP] + L-alanine + H(+) = (8S)-8-amino-7-oxononanoate + holo-[ACP] + CO2</text>
        <dbReference type="Rhea" id="RHEA:42288"/>
        <dbReference type="Rhea" id="RHEA-COMP:9685"/>
        <dbReference type="Rhea" id="RHEA-COMP:9955"/>
        <dbReference type="ChEBI" id="CHEBI:15378"/>
        <dbReference type="ChEBI" id="CHEBI:16526"/>
        <dbReference type="ChEBI" id="CHEBI:57972"/>
        <dbReference type="ChEBI" id="CHEBI:64479"/>
        <dbReference type="ChEBI" id="CHEBI:78846"/>
        <dbReference type="ChEBI" id="CHEBI:149468"/>
        <dbReference type="EC" id="2.3.1.47"/>
    </reaction>
</comment>
<comment type="cofactor">
    <cofactor evidence="1">
        <name>pyridoxal 5'-phosphate</name>
        <dbReference type="ChEBI" id="CHEBI:597326"/>
    </cofactor>
</comment>
<comment type="pathway">
    <text evidence="1">Cofactor biosynthesis; biotin biosynthesis.</text>
</comment>
<comment type="subunit">
    <text evidence="1">Homodimer.</text>
</comment>
<comment type="similarity">
    <text evidence="1">Belongs to the class-II pyridoxal-phosphate-dependent aminotransferase family. BioF subfamily.</text>
</comment>
<protein>
    <recommendedName>
        <fullName evidence="1">8-amino-7-oxononanoate synthase</fullName>
        <shortName evidence="1">AONS</shortName>
        <ecNumber evidence="1">2.3.1.47</ecNumber>
    </recommendedName>
    <alternativeName>
        <fullName evidence="1">7-keto-8-amino-pelargonic acid synthase</fullName>
        <shortName evidence="1">7-KAP synthase</shortName>
        <shortName evidence="1">KAPA synthase</shortName>
    </alternativeName>
    <alternativeName>
        <fullName evidence="1">8-amino-7-ketopelargonate synthase</fullName>
    </alternativeName>
</protein>
<dbReference type="EC" id="2.3.1.47" evidence="1"/>
<dbReference type="EMBL" id="CP001144">
    <property type="protein sequence ID" value="ACH76790.1"/>
    <property type="molecule type" value="Genomic_DNA"/>
</dbReference>
<dbReference type="RefSeq" id="WP_000118940.1">
    <property type="nucleotide sequence ID" value="NC_011205.1"/>
</dbReference>
<dbReference type="SMR" id="B5FP62"/>
<dbReference type="KEGG" id="sed:SeD_A0890"/>
<dbReference type="HOGENOM" id="CLU_015846_11_2_6"/>
<dbReference type="UniPathway" id="UPA00078"/>
<dbReference type="Proteomes" id="UP000008322">
    <property type="component" value="Chromosome"/>
</dbReference>
<dbReference type="GO" id="GO:0008710">
    <property type="term" value="F:8-amino-7-oxononanoate synthase activity"/>
    <property type="evidence" value="ECO:0007669"/>
    <property type="project" value="UniProtKB-UniRule"/>
</dbReference>
<dbReference type="GO" id="GO:0030170">
    <property type="term" value="F:pyridoxal phosphate binding"/>
    <property type="evidence" value="ECO:0007669"/>
    <property type="project" value="UniProtKB-UniRule"/>
</dbReference>
<dbReference type="GO" id="GO:0009102">
    <property type="term" value="P:biotin biosynthetic process"/>
    <property type="evidence" value="ECO:0007669"/>
    <property type="project" value="UniProtKB-UniRule"/>
</dbReference>
<dbReference type="CDD" id="cd06454">
    <property type="entry name" value="KBL_like"/>
    <property type="match status" value="1"/>
</dbReference>
<dbReference type="FunFam" id="3.40.640.10:FF:000095">
    <property type="entry name" value="8-amino-7-oxononanoate synthase"/>
    <property type="match status" value="1"/>
</dbReference>
<dbReference type="Gene3D" id="3.90.1150.10">
    <property type="entry name" value="Aspartate Aminotransferase, domain 1"/>
    <property type="match status" value="1"/>
</dbReference>
<dbReference type="Gene3D" id="3.40.640.10">
    <property type="entry name" value="Type I PLP-dependent aspartate aminotransferase-like (Major domain)"/>
    <property type="match status" value="1"/>
</dbReference>
<dbReference type="HAMAP" id="MF_01693">
    <property type="entry name" value="BioF_aminotrans_2"/>
    <property type="match status" value="1"/>
</dbReference>
<dbReference type="InterPro" id="IPR001917">
    <property type="entry name" value="Aminotrans_II_pyridoxalP_BS"/>
</dbReference>
<dbReference type="InterPro" id="IPR004839">
    <property type="entry name" value="Aminotransferase_I/II_large"/>
</dbReference>
<dbReference type="InterPro" id="IPR050087">
    <property type="entry name" value="AON_synthase_class-II"/>
</dbReference>
<dbReference type="InterPro" id="IPR004723">
    <property type="entry name" value="AONS_Archaea/Proteobacteria"/>
</dbReference>
<dbReference type="InterPro" id="IPR022834">
    <property type="entry name" value="AONS_Proteobacteria"/>
</dbReference>
<dbReference type="InterPro" id="IPR015424">
    <property type="entry name" value="PyrdxlP-dep_Trfase"/>
</dbReference>
<dbReference type="InterPro" id="IPR015421">
    <property type="entry name" value="PyrdxlP-dep_Trfase_major"/>
</dbReference>
<dbReference type="InterPro" id="IPR015422">
    <property type="entry name" value="PyrdxlP-dep_Trfase_small"/>
</dbReference>
<dbReference type="NCBIfam" id="TIGR00858">
    <property type="entry name" value="bioF"/>
    <property type="match status" value="1"/>
</dbReference>
<dbReference type="PANTHER" id="PTHR13693:SF100">
    <property type="entry name" value="8-AMINO-7-OXONONANOATE SYNTHASE"/>
    <property type="match status" value="1"/>
</dbReference>
<dbReference type="PANTHER" id="PTHR13693">
    <property type="entry name" value="CLASS II AMINOTRANSFERASE/8-AMINO-7-OXONONANOATE SYNTHASE"/>
    <property type="match status" value="1"/>
</dbReference>
<dbReference type="Pfam" id="PF00155">
    <property type="entry name" value="Aminotran_1_2"/>
    <property type="match status" value="1"/>
</dbReference>
<dbReference type="SUPFAM" id="SSF53383">
    <property type="entry name" value="PLP-dependent transferases"/>
    <property type="match status" value="1"/>
</dbReference>
<dbReference type="PROSITE" id="PS00599">
    <property type="entry name" value="AA_TRANSFER_CLASS_2"/>
    <property type="match status" value="1"/>
</dbReference>
<reference key="1">
    <citation type="journal article" date="2011" name="J. Bacteriol.">
        <title>Comparative genomics of 28 Salmonella enterica isolates: evidence for CRISPR-mediated adaptive sublineage evolution.</title>
        <authorList>
            <person name="Fricke W.F."/>
            <person name="Mammel M.K."/>
            <person name="McDermott P.F."/>
            <person name="Tartera C."/>
            <person name="White D.G."/>
            <person name="Leclerc J.E."/>
            <person name="Ravel J."/>
            <person name="Cebula T.A."/>
        </authorList>
    </citation>
    <scope>NUCLEOTIDE SEQUENCE [LARGE SCALE GENOMIC DNA]</scope>
    <source>
        <strain>CT_02021853</strain>
    </source>
</reference>
<keyword id="KW-0093">Biotin biosynthesis</keyword>
<keyword id="KW-0663">Pyridoxal phosphate</keyword>
<keyword id="KW-0808">Transferase</keyword>
<sequence length="385" mass="42000">MSWQQRVDDALTARRATDTLRRRYVVSQGAGRWLVANGRQYLNFSSNDYLGLSQHPQIIRAWQQAATRFGVGSGGSGHISGYSVAHQALEEELAQWLGYPRALLFISGFAANQAVITALMKKNDRIVADRLSHASLLEAANLSPAQLRRFIHNDTQHLSRLLQSPCVGQQLVVTEGVYSMDGDSAPLAEIQHIARRHHAWLLVDDAHGIGVTGDEGRGTCWQRGGKPELLVVTFGKGFGVSGAAVLCSESVADYLLQFARHLVYSTSMPPAQAQALSASLAVIRSDEGRERREKLAALVQRFRAGVNASRFTLLNAHSAIQPLIVGDNSRALRLAEALRQQGCWATAIRPPTVPVGTARLRLTLTQAHEACDIDRLLEVLHGAGE</sequence>
<evidence type="ECO:0000255" key="1">
    <source>
        <dbReference type="HAMAP-Rule" id="MF_01693"/>
    </source>
</evidence>